<protein>
    <recommendedName>
        <fullName evidence="1">CTP synthase</fullName>
        <ecNumber evidence="1">6.3.4.2</ecNumber>
    </recommendedName>
    <alternativeName>
        <fullName evidence="1">Cytidine 5'-triphosphate synthase</fullName>
    </alternativeName>
    <alternativeName>
        <fullName evidence="1">Cytidine triphosphate synthetase</fullName>
        <shortName evidence="1">CTP synthetase</shortName>
        <shortName evidence="1">CTPS</shortName>
    </alternativeName>
    <alternativeName>
        <fullName evidence="1">UTP--ammonia ligase</fullName>
    </alternativeName>
</protein>
<proteinExistence type="inferred from homology"/>
<comment type="function">
    <text evidence="1">Catalyzes the ATP-dependent amination of UTP to CTP with either L-glutamine or ammonia as the source of nitrogen. Regulates intracellular CTP levels through interactions with the four ribonucleotide triphosphates.</text>
</comment>
<comment type="catalytic activity">
    <reaction evidence="1">
        <text>UTP + L-glutamine + ATP + H2O = CTP + L-glutamate + ADP + phosphate + 2 H(+)</text>
        <dbReference type="Rhea" id="RHEA:26426"/>
        <dbReference type="ChEBI" id="CHEBI:15377"/>
        <dbReference type="ChEBI" id="CHEBI:15378"/>
        <dbReference type="ChEBI" id="CHEBI:29985"/>
        <dbReference type="ChEBI" id="CHEBI:30616"/>
        <dbReference type="ChEBI" id="CHEBI:37563"/>
        <dbReference type="ChEBI" id="CHEBI:43474"/>
        <dbReference type="ChEBI" id="CHEBI:46398"/>
        <dbReference type="ChEBI" id="CHEBI:58359"/>
        <dbReference type="ChEBI" id="CHEBI:456216"/>
        <dbReference type="EC" id="6.3.4.2"/>
    </reaction>
</comment>
<comment type="catalytic activity">
    <reaction evidence="1">
        <text>L-glutamine + H2O = L-glutamate + NH4(+)</text>
        <dbReference type="Rhea" id="RHEA:15889"/>
        <dbReference type="ChEBI" id="CHEBI:15377"/>
        <dbReference type="ChEBI" id="CHEBI:28938"/>
        <dbReference type="ChEBI" id="CHEBI:29985"/>
        <dbReference type="ChEBI" id="CHEBI:58359"/>
    </reaction>
</comment>
<comment type="catalytic activity">
    <reaction evidence="1">
        <text>UTP + NH4(+) + ATP = CTP + ADP + phosphate + 2 H(+)</text>
        <dbReference type="Rhea" id="RHEA:16597"/>
        <dbReference type="ChEBI" id="CHEBI:15378"/>
        <dbReference type="ChEBI" id="CHEBI:28938"/>
        <dbReference type="ChEBI" id="CHEBI:30616"/>
        <dbReference type="ChEBI" id="CHEBI:37563"/>
        <dbReference type="ChEBI" id="CHEBI:43474"/>
        <dbReference type="ChEBI" id="CHEBI:46398"/>
        <dbReference type="ChEBI" id="CHEBI:456216"/>
    </reaction>
</comment>
<comment type="activity regulation">
    <text evidence="1">Allosterically activated by GTP, when glutamine is the substrate; GTP has no effect on the reaction when ammonia is the substrate. The allosteric effector GTP functions by stabilizing the protein conformation that binds the tetrahedral intermediate(s) formed during glutamine hydrolysis. Inhibited by the product CTP, via allosteric rather than competitive inhibition.</text>
</comment>
<comment type="pathway">
    <text evidence="1">Pyrimidine metabolism; CTP biosynthesis via de novo pathway; CTP from UDP: step 2/2.</text>
</comment>
<comment type="subunit">
    <text evidence="1">Homotetramer.</text>
</comment>
<comment type="miscellaneous">
    <text evidence="1">CTPSs have evolved a hybrid strategy for distinguishing between UTP and CTP. The overlapping regions of the product feedback inhibitory and substrate sites recognize a common feature in both compounds, the triphosphate moiety. To differentiate isosteric substrate and product pyrimidine rings, an additional pocket far from the expected kinase/ligase catalytic site, specifically recognizes the cytosine and ribose portions of the product inhibitor.</text>
</comment>
<comment type="similarity">
    <text evidence="1">Belongs to the CTP synthase family.</text>
</comment>
<dbReference type="EC" id="6.3.4.2" evidence="1"/>
<dbReference type="EMBL" id="AE014295">
    <property type="protein sequence ID" value="AAN24687.1"/>
    <property type="molecule type" value="Genomic_DNA"/>
</dbReference>
<dbReference type="RefSeq" id="NP_696051.1">
    <property type="nucleotide sequence ID" value="NC_004307.2"/>
</dbReference>
<dbReference type="RefSeq" id="WP_007052143.1">
    <property type="nucleotide sequence ID" value="NC_004307.2"/>
</dbReference>
<dbReference type="SMR" id="Q8G5X7"/>
<dbReference type="STRING" id="206672.BL0874"/>
<dbReference type="EnsemblBacteria" id="AAN24687">
    <property type="protein sequence ID" value="AAN24687"/>
    <property type="gene ID" value="BL0874"/>
</dbReference>
<dbReference type="KEGG" id="blo:BL0874"/>
<dbReference type="PATRIC" id="fig|206672.9.peg.568"/>
<dbReference type="HOGENOM" id="CLU_011675_5_0_11"/>
<dbReference type="OrthoDB" id="9801107at2"/>
<dbReference type="PhylomeDB" id="Q8G5X7"/>
<dbReference type="UniPathway" id="UPA00159">
    <property type="reaction ID" value="UER00277"/>
</dbReference>
<dbReference type="Proteomes" id="UP000000439">
    <property type="component" value="Chromosome"/>
</dbReference>
<dbReference type="GO" id="GO:0005829">
    <property type="term" value="C:cytosol"/>
    <property type="evidence" value="ECO:0007669"/>
    <property type="project" value="TreeGrafter"/>
</dbReference>
<dbReference type="GO" id="GO:0005524">
    <property type="term" value="F:ATP binding"/>
    <property type="evidence" value="ECO:0007669"/>
    <property type="project" value="UniProtKB-KW"/>
</dbReference>
<dbReference type="GO" id="GO:0003883">
    <property type="term" value="F:CTP synthase activity"/>
    <property type="evidence" value="ECO:0007669"/>
    <property type="project" value="UniProtKB-UniRule"/>
</dbReference>
<dbReference type="GO" id="GO:0004359">
    <property type="term" value="F:glutaminase activity"/>
    <property type="evidence" value="ECO:0007669"/>
    <property type="project" value="RHEA"/>
</dbReference>
<dbReference type="GO" id="GO:0042802">
    <property type="term" value="F:identical protein binding"/>
    <property type="evidence" value="ECO:0007669"/>
    <property type="project" value="TreeGrafter"/>
</dbReference>
<dbReference type="GO" id="GO:0046872">
    <property type="term" value="F:metal ion binding"/>
    <property type="evidence" value="ECO:0007669"/>
    <property type="project" value="UniProtKB-KW"/>
</dbReference>
<dbReference type="GO" id="GO:0044210">
    <property type="term" value="P:'de novo' CTP biosynthetic process"/>
    <property type="evidence" value="ECO:0007669"/>
    <property type="project" value="UniProtKB-UniRule"/>
</dbReference>
<dbReference type="GO" id="GO:0019856">
    <property type="term" value="P:pyrimidine nucleobase biosynthetic process"/>
    <property type="evidence" value="ECO:0007669"/>
    <property type="project" value="TreeGrafter"/>
</dbReference>
<dbReference type="CDD" id="cd03113">
    <property type="entry name" value="CTPS_N"/>
    <property type="match status" value="1"/>
</dbReference>
<dbReference type="CDD" id="cd01746">
    <property type="entry name" value="GATase1_CTP_Synthase"/>
    <property type="match status" value="1"/>
</dbReference>
<dbReference type="FunFam" id="3.40.50.300:FF:000009">
    <property type="entry name" value="CTP synthase"/>
    <property type="match status" value="1"/>
</dbReference>
<dbReference type="FunFam" id="3.40.50.880:FF:000002">
    <property type="entry name" value="CTP synthase"/>
    <property type="match status" value="1"/>
</dbReference>
<dbReference type="Gene3D" id="3.40.50.880">
    <property type="match status" value="1"/>
</dbReference>
<dbReference type="Gene3D" id="3.40.50.300">
    <property type="entry name" value="P-loop containing nucleotide triphosphate hydrolases"/>
    <property type="match status" value="1"/>
</dbReference>
<dbReference type="HAMAP" id="MF_01227">
    <property type="entry name" value="PyrG"/>
    <property type="match status" value="1"/>
</dbReference>
<dbReference type="InterPro" id="IPR029062">
    <property type="entry name" value="Class_I_gatase-like"/>
</dbReference>
<dbReference type="InterPro" id="IPR004468">
    <property type="entry name" value="CTP_synthase"/>
</dbReference>
<dbReference type="InterPro" id="IPR017456">
    <property type="entry name" value="CTP_synthase_N"/>
</dbReference>
<dbReference type="InterPro" id="IPR017926">
    <property type="entry name" value="GATASE"/>
</dbReference>
<dbReference type="InterPro" id="IPR033828">
    <property type="entry name" value="GATase1_CTP_Synthase"/>
</dbReference>
<dbReference type="InterPro" id="IPR027417">
    <property type="entry name" value="P-loop_NTPase"/>
</dbReference>
<dbReference type="NCBIfam" id="NF003792">
    <property type="entry name" value="PRK05380.1"/>
    <property type="match status" value="1"/>
</dbReference>
<dbReference type="NCBIfam" id="TIGR00337">
    <property type="entry name" value="PyrG"/>
    <property type="match status" value="1"/>
</dbReference>
<dbReference type="PANTHER" id="PTHR11550">
    <property type="entry name" value="CTP SYNTHASE"/>
    <property type="match status" value="1"/>
</dbReference>
<dbReference type="PANTHER" id="PTHR11550:SF0">
    <property type="entry name" value="CTP SYNTHASE-RELATED"/>
    <property type="match status" value="1"/>
</dbReference>
<dbReference type="Pfam" id="PF06418">
    <property type="entry name" value="CTP_synth_N"/>
    <property type="match status" value="1"/>
</dbReference>
<dbReference type="Pfam" id="PF00117">
    <property type="entry name" value="GATase"/>
    <property type="match status" value="1"/>
</dbReference>
<dbReference type="SUPFAM" id="SSF52317">
    <property type="entry name" value="Class I glutamine amidotransferase-like"/>
    <property type="match status" value="1"/>
</dbReference>
<dbReference type="SUPFAM" id="SSF52540">
    <property type="entry name" value="P-loop containing nucleoside triphosphate hydrolases"/>
    <property type="match status" value="1"/>
</dbReference>
<dbReference type="PROSITE" id="PS51273">
    <property type="entry name" value="GATASE_TYPE_1"/>
    <property type="match status" value="1"/>
</dbReference>
<evidence type="ECO:0000255" key="1">
    <source>
        <dbReference type="HAMAP-Rule" id="MF_01227"/>
    </source>
</evidence>
<organism>
    <name type="scientific">Bifidobacterium longum (strain NCC 2705)</name>
    <dbReference type="NCBI Taxonomy" id="206672"/>
    <lineage>
        <taxon>Bacteria</taxon>
        <taxon>Bacillati</taxon>
        <taxon>Actinomycetota</taxon>
        <taxon>Actinomycetes</taxon>
        <taxon>Bifidobacteriales</taxon>
        <taxon>Bifidobacteriaceae</taxon>
        <taxon>Bifidobacterium</taxon>
    </lineage>
</organism>
<reference key="1">
    <citation type="journal article" date="2002" name="Proc. Natl. Acad. Sci. U.S.A.">
        <title>The genome sequence of Bifidobacterium longum reflects its adaptation to the human gastrointestinal tract.</title>
        <authorList>
            <person name="Schell M.A."/>
            <person name="Karmirantzou M."/>
            <person name="Snel B."/>
            <person name="Vilanova D."/>
            <person name="Berger B."/>
            <person name="Pessi G."/>
            <person name="Zwahlen M.-C."/>
            <person name="Desiere F."/>
            <person name="Bork P."/>
            <person name="Delley M."/>
            <person name="Pridmore R.D."/>
            <person name="Arigoni F."/>
        </authorList>
    </citation>
    <scope>NUCLEOTIDE SEQUENCE [LARGE SCALE GENOMIC DNA]</scope>
    <source>
        <strain>NCC 2705</strain>
    </source>
</reference>
<keyword id="KW-0067">ATP-binding</keyword>
<keyword id="KW-0315">Glutamine amidotransferase</keyword>
<keyword id="KW-0436">Ligase</keyword>
<keyword id="KW-0460">Magnesium</keyword>
<keyword id="KW-0479">Metal-binding</keyword>
<keyword id="KW-0547">Nucleotide-binding</keyword>
<keyword id="KW-0665">Pyrimidine biosynthesis</keyword>
<keyword id="KW-1185">Reference proteome</keyword>
<accession>Q8G5X7</accession>
<feature type="chain" id="PRO_0000266069" description="CTP synthase">
    <location>
        <begin position="1"/>
        <end position="553"/>
    </location>
</feature>
<feature type="domain" description="Glutamine amidotransferase type-1" evidence="1">
    <location>
        <begin position="303"/>
        <end position="552"/>
    </location>
</feature>
<feature type="region of interest" description="Amidoligase domain" evidence="1">
    <location>
        <begin position="1"/>
        <end position="278"/>
    </location>
</feature>
<feature type="active site" description="Nucleophile; for glutamine hydrolysis" evidence="1">
    <location>
        <position position="393"/>
    </location>
</feature>
<feature type="active site" evidence="1">
    <location>
        <position position="525"/>
    </location>
</feature>
<feature type="active site" evidence="1">
    <location>
        <position position="527"/>
    </location>
</feature>
<feature type="binding site" evidence="1">
    <location>
        <position position="25"/>
    </location>
    <ligand>
        <name>CTP</name>
        <dbReference type="ChEBI" id="CHEBI:37563"/>
        <note>allosteric inhibitor</note>
    </ligand>
</feature>
<feature type="binding site" evidence="1">
    <location>
        <position position="25"/>
    </location>
    <ligand>
        <name>UTP</name>
        <dbReference type="ChEBI" id="CHEBI:46398"/>
    </ligand>
</feature>
<feature type="binding site" evidence="1">
    <location>
        <begin position="26"/>
        <end position="31"/>
    </location>
    <ligand>
        <name>ATP</name>
        <dbReference type="ChEBI" id="CHEBI:30616"/>
    </ligand>
</feature>
<feature type="binding site" evidence="1">
    <location>
        <position position="83"/>
    </location>
    <ligand>
        <name>ATP</name>
        <dbReference type="ChEBI" id="CHEBI:30616"/>
    </ligand>
</feature>
<feature type="binding site" evidence="1">
    <location>
        <position position="83"/>
    </location>
    <ligand>
        <name>Mg(2+)</name>
        <dbReference type="ChEBI" id="CHEBI:18420"/>
    </ligand>
</feature>
<feature type="binding site" evidence="1">
    <location>
        <position position="152"/>
    </location>
    <ligand>
        <name>Mg(2+)</name>
        <dbReference type="ChEBI" id="CHEBI:18420"/>
    </ligand>
</feature>
<feature type="binding site" evidence="1">
    <location>
        <begin position="159"/>
        <end position="161"/>
    </location>
    <ligand>
        <name>CTP</name>
        <dbReference type="ChEBI" id="CHEBI:37563"/>
        <note>allosteric inhibitor</note>
    </ligand>
</feature>
<feature type="binding site" evidence="1">
    <location>
        <begin position="199"/>
        <end position="204"/>
    </location>
    <ligand>
        <name>CTP</name>
        <dbReference type="ChEBI" id="CHEBI:37563"/>
        <note>allosteric inhibitor</note>
    </ligand>
</feature>
<feature type="binding site" evidence="1">
    <location>
        <begin position="199"/>
        <end position="204"/>
    </location>
    <ligand>
        <name>UTP</name>
        <dbReference type="ChEBI" id="CHEBI:46398"/>
    </ligand>
</feature>
<feature type="binding site" evidence="1">
    <location>
        <position position="235"/>
    </location>
    <ligand>
        <name>CTP</name>
        <dbReference type="ChEBI" id="CHEBI:37563"/>
        <note>allosteric inhibitor</note>
    </ligand>
</feature>
<feature type="binding site" evidence="1">
    <location>
        <position position="235"/>
    </location>
    <ligand>
        <name>UTP</name>
        <dbReference type="ChEBI" id="CHEBI:46398"/>
    </ligand>
</feature>
<feature type="binding site" evidence="1">
    <location>
        <position position="366"/>
    </location>
    <ligand>
        <name>L-glutamine</name>
        <dbReference type="ChEBI" id="CHEBI:58359"/>
    </ligand>
</feature>
<feature type="binding site" evidence="1">
    <location>
        <begin position="394"/>
        <end position="397"/>
    </location>
    <ligand>
        <name>L-glutamine</name>
        <dbReference type="ChEBI" id="CHEBI:58359"/>
    </ligand>
</feature>
<feature type="binding site" evidence="1">
    <location>
        <position position="417"/>
    </location>
    <ligand>
        <name>L-glutamine</name>
        <dbReference type="ChEBI" id="CHEBI:58359"/>
    </ligand>
</feature>
<feature type="binding site" evidence="1">
    <location>
        <position position="478"/>
    </location>
    <ligand>
        <name>L-glutamine</name>
        <dbReference type="ChEBI" id="CHEBI:58359"/>
    </ligand>
</feature>
<gene>
    <name evidence="1" type="primary">pyrG</name>
    <name type="ordered locus">BL0874</name>
</gene>
<sequence length="553" mass="60983">MVRRTHGNSQEHVTKHIFVTGGVVSSLGKGLTASSLGRLLRSRGIHVLQQKLDPYINVDPGTMNPFQHGEVYVTEDGAETDLDIGHYERFLDVFLSQKANVTTGQIYQEVLRKERAGEYLGQCVQVIPHITNEIKSRMRAQASDDVDVIITEIGGTVGDIESQPFLEAAREVRRDLGPDNCMFVHVSLVPYISAAHELKTKPTQHSVMMLRQLGISPDALVLRSDRPLNQSIKDKISLMCDVDAEGVVNCVDAPSIYDVPKILFEEGLDAYVVRELGLPFHDVDWDEWADLLERVHHPKHEVNIAIVGKYIDLPDAYLSVTEAIKAGGFANWAKVNVKWVAADRCETTEGAAAALDNVDGIVIPGGFGIRGIDGKIGALKFARETKLPALGLCLGLQSMVIEYSRHVLGIEDANSSEFEPDCANPVIATMEEQKDIVAGKGDMGHTMRLGSYPAELEEGSLVAELYGTTHVTERHRHRYEVNVAYKDRLREGGLRISGQSPDGELTEFVELPQDVHPFYVATQAHPEFKSRPTKPHPLFAGLVKAALDHQAAR</sequence>
<name>PYRG_BIFLO</name>